<dbReference type="EMBL" id="CU329671">
    <property type="protein sequence ID" value="CAA19128.1"/>
    <property type="molecule type" value="Genomic_DNA"/>
</dbReference>
<dbReference type="EMBL" id="U97374">
    <property type="protein sequence ID" value="AAB63866.1"/>
    <property type="molecule type" value="mRNA"/>
</dbReference>
<dbReference type="PIR" id="T39831">
    <property type="entry name" value="T39831"/>
</dbReference>
<dbReference type="PIR" id="T40012">
    <property type="entry name" value="T40012"/>
</dbReference>
<dbReference type="RefSeq" id="NP_596350.1">
    <property type="nucleotide sequence ID" value="NM_001022270.2"/>
</dbReference>
<dbReference type="SMR" id="P87158"/>
<dbReference type="BioGRID" id="277174">
    <property type="interactions" value="61"/>
</dbReference>
<dbReference type="FunCoup" id="P87158">
    <property type="interactions" value="447"/>
</dbReference>
<dbReference type="STRING" id="284812.P87158"/>
<dbReference type="iPTMnet" id="P87158"/>
<dbReference type="PaxDb" id="4896-SPBC19F8.08.1"/>
<dbReference type="EnsemblFungi" id="SPBC19F8.08.1">
    <property type="protein sequence ID" value="SPBC19F8.08.1:pep"/>
    <property type="gene ID" value="SPBC19F8.08"/>
</dbReference>
<dbReference type="GeneID" id="2540649"/>
<dbReference type="KEGG" id="spo:2540649"/>
<dbReference type="PomBase" id="SPBC19F8.08">
    <property type="gene designation" value="rps401"/>
</dbReference>
<dbReference type="VEuPathDB" id="FungiDB:SPBC19F8.08"/>
<dbReference type="eggNOG" id="KOG0378">
    <property type="taxonomic scope" value="Eukaryota"/>
</dbReference>
<dbReference type="HOGENOM" id="CLU_060400_1_0_1"/>
<dbReference type="InParanoid" id="P87158"/>
<dbReference type="OMA" id="GHIQLNL"/>
<dbReference type="PhylomeDB" id="P87158"/>
<dbReference type="Reactome" id="R-SPO-156827">
    <property type="pathway name" value="L13a-mediated translational silencing of Ceruloplasmin expression"/>
</dbReference>
<dbReference type="Reactome" id="R-SPO-1799339">
    <property type="pathway name" value="SRP-dependent cotranslational protein targeting to membrane"/>
</dbReference>
<dbReference type="Reactome" id="R-SPO-72649">
    <property type="pathway name" value="Translation initiation complex formation"/>
</dbReference>
<dbReference type="Reactome" id="R-SPO-72689">
    <property type="pathway name" value="Formation of a pool of free 40S subunits"/>
</dbReference>
<dbReference type="Reactome" id="R-SPO-72695">
    <property type="pathway name" value="Formation of the ternary complex, and subsequently, the 43S complex"/>
</dbReference>
<dbReference type="Reactome" id="R-SPO-72702">
    <property type="pathway name" value="Ribosomal scanning and start codon recognition"/>
</dbReference>
<dbReference type="Reactome" id="R-SPO-72706">
    <property type="pathway name" value="GTP hydrolysis and joining of the 60S ribosomal subunit"/>
</dbReference>
<dbReference type="Reactome" id="R-SPO-975956">
    <property type="pathway name" value="Nonsense Mediated Decay (NMD) independent of the Exon Junction Complex (EJC)"/>
</dbReference>
<dbReference type="Reactome" id="R-SPO-975957">
    <property type="pathway name" value="Nonsense Mediated Decay (NMD) enhanced by the Exon Junction Complex (EJC)"/>
</dbReference>
<dbReference type="PRO" id="PR:P87158"/>
<dbReference type="Proteomes" id="UP000002485">
    <property type="component" value="Chromosome II"/>
</dbReference>
<dbReference type="GO" id="GO:0005829">
    <property type="term" value="C:cytosol"/>
    <property type="evidence" value="ECO:0007005"/>
    <property type="project" value="PomBase"/>
</dbReference>
<dbReference type="GO" id="GO:0022627">
    <property type="term" value="C:cytosolic small ribosomal subunit"/>
    <property type="evidence" value="ECO:0000318"/>
    <property type="project" value="GO_Central"/>
</dbReference>
<dbReference type="GO" id="GO:0003723">
    <property type="term" value="F:RNA binding"/>
    <property type="evidence" value="ECO:0000318"/>
    <property type="project" value="GO_Central"/>
</dbReference>
<dbReference type="GO" id="GO:0019843">
    <property type="term" value="F:rRNA binding"/>
    <property type="evidence" value="ECO:0007669"/>
    <property type="project" value="UniProtKB-KW"/>
</dbReference>
<dbReference type="GO" id="GO:0003735">
    <property type="term" value="F:structural constituent of ribosome"/>
    <property type="evidence" value="ECO:0000318"/>
    <property type="project" value="GO_Central"/>
</dbReference>
<dbReference type="GO" id="GO:0002181">
    <property type="term" value="P:cytoplasmic translation"/>
    <property type="evidence" value="ECO:0000266"/>
    <property type="project" value="PomBase"/>
</dbReference>
<dbReference type="GO" id="GO:0006412">
    <property type="term" value="P:translation"/>
    <property type="evidence" value="ECO:0000318"/>
    <property type="project" value="GO_Central"/>
</dbReference>
<dbReference type="CDD" id="cd06087">
    <property type="entry name" value="KOW_RPS4"/>
    <property type="match status" value="1"/>
</dbReference>
<dbReference type="CDD" id="cd00165">
    <property type="entry name" value="S4"/>
    <property type="match status" value="1"/>
</dbReference>
<dbReference type="FunFam" id="2.30.30.30:FF:000005">
    <property type="entry name" value="40S ribosomal protein S4"/>
    <property type="match status" value="1"/>
</dbReference>
<dbReference type="FunFam" id="2.40.50.740:FF:000001">
    <property type="entry name" value="40S ribosomal protein S4"/>
    <property type="match status" value="1"/>
</dbReference>
<dbReference type="FunFam" id="3.10.290.10:FF:000051">
    <property type="entry name" value="40S ribosomal protein S4, X isoform"/>
    <property type="match status" value="1"/>
</dbReference>
<dbReference type="Gene3D" id="2.30.30.30">
    <property type="match status" value="1"/>
</dbReference>
<dbReference type="Gene3D" id="2.40.50.740">
    <property type="match status" value="1"/>
</dbReference>
<dbReference type="Gene3D" id="3.10.290.10">
    <property type="entry name" value="RNA-binding S4 domain"/>
    <property type="match status" value="1"/>
</dbReference>
<dbReference type="HAMAP" id="MF_00485">
    <property type="entry name" value="Ribosomal_eS4"/>
    <property type="match status" value="1"/>
</dbReference>
<dbReference type="InterPro" id="IPR005824">
    <property type="entry name" value="KOW"/>
</dbReference>
<dbReference type="InterPro" id="IPR014722">
    <property type="entry name" value="Rib_uL2_dom2"/>
</dbReference>
<dbReference type="InterPro" id="IPR000876">
    <property type="entry name" value="Ribosomal_eS4"/>
</dbReference>
<dbReference type="InterPro" id="IPR032277">
    <property type="entry name" value="Ribosomal_eS4_C"/>
</dbReference>
<dbReference type="InterPro" id="IPR013845">
    <property type="entry name" value="Ribosomal_eS4_central_region"/>
</dbReference>
<dbReference type="InterPro" id="IPR038237">
    <property type="entry name" value="Ribosomal_eS4_central_sf"/>
</dbReference>
<dbReference type="InterPro" id="IPR041982">
    <property type="entry name" value="Ribosomal_eS4_KOW"/>
</dbReference>
<dbReference type="InterPro" id="IPR013843">
    <property type="entry name" value="Ribosomal_eS4_N"/>
</dbReference>
<dbReference type="InterPro" id="IPR018199">
    <property type="entry name" value="Ribosomal_eS4_N_CS"/>
</dbReference>
<dbReference type="InterPro" id="IPR002942">
    <property type="entry name" value="S4_RNA-bd"/>
</dbReference>
<dbReference type="InterPro" id="IPR036986">
    <property type="entry name" value="S4_RNA-bd_sf"/>
</dbReference>
<dbReference type="PANTHER" id="PTHR11581">
    <property type="entry name" value="30S/40S RIBOSOMAL PROTEIN S4"/>
    <property type="match status" value="1"/>
</dbReference>
<dbReference type="PANTHER" id="PTHR11581:SF0">
    <property type="entry name" value="SMALL RIBOSOMAL SUBUNIT PROTEIN ES4"/>
    <property type="match status" value="1"/>
</dbReference>
<dbReference type="Pfam" id="PF16121">
    <property type="entry name" value="40S_S4_C"/>
    <property type="match status" value="1"/>
</dbReference>
<dbReference type="Pfam" id="PF00467">
    <property type="entry name" value="KOW"/>
    <property type="match status" value="1"/>
</dbReference>
<dbReference type="Pfam" id="PF00900">
    <property type="entry name" value="Ribosomal_S4e"/>
    <property type="match status" value="1"/>
</dbReference>
<dbReference type="Pfam" id="PF08071">
    <property type="entry name" value="RS4NT"/>
    <property type="match status" value="1"/>
</dbReference>
<dbReference type="PIRSF" id="PIRSF002116">
    <property type="entry name" value="Ribosomal_S4"/>
    <property type="match status" value="1"/>
</dbReference>
<dbReference type="SMART" id="SM00363">
    <property type="entry name" value="S4"/>
    <property type="match status" value="1"/>
</dbReference>
<dbReference type="PROSITE" id="PS00528">
    <property type="entry name" value="RIBOSOMAL_S4E"/>
    <property type="match status" value="1"/>
</dbReference>
<dbReference type="PROSITE" id="PS50889">
    <property type="entry name" value="S4"/>
    <property type="match status" value="1"/>
</dbReference>
<accession>P87158</accession>
<accession>O14378</accession>
<protein>
    <recommendedName>
        <fullName evidence="3">Small ribosomal subunit protein eS4A</fullName>
    </recommendedName>
    <alternativeName>
        <fullName>40S ribosomal protein S4-A</fullName>
    </alternativeName>
</protein>
<gene>
    <name type="primary">rps401</name>
    <name type="synonym">rps4</name>
    <name type="synonym">rps4a</name>
    <name type="ORF">SPBC19F8.08</name>
    <name type="ORF">SPBC25H2.17c</name>
</gene>
<feature type="chain" id="PRO_0000130839" description="Small ribosomal subunit protein eS4A">
    <location>
        <begin position="1"/>
        <end position="262"/>
    </location>
</feature>
<feature type="domain" description="S4 RNA-binding">
    <location>
        <begin position="42"/>
        <end position="105"/>
    </location>
</feature>
<feature type="sequence conflict" description="In Ref. 2; AAB63866." evidence="3" ref="2">
    <original>L</original>
    <variation>F</variation>
    <location>
        <position position="9"/>
    </location>
</feature>
<name>RS4A_SCHPO</name>
<proteinExistence type="evidence at transcript level"/>
<organism>
    <name type="scientific">Schizosaccharomyces pombe (strain 972 / ATCC 24843)</name>
    <name type="common">Fission yeast</name>
    <dbReference type="NCBI Taxonomy" id="284812"/>
    <lineage>
        <taxon>Eukaryota</taxon>
        <taxon>Fungi</taxon>
        <taxon>Dikarya</taxon>
        <taxon>Ascomycota</taxon>
        <taxon>Taphrinomycotina</taxon>
        <taxon>Schizosaccharomycetes</taxon>
        <taxon>Schizosaccharomycetales</taxon>
        <taxon>Schizosaccharomycetaceae</taxon>
        <taxon>Schizosaccharomyces</taxon>
    </lineage>
</organism>
<evidence type="ECO:0000250" key="1">
    <source>
        <dbReference type="UniProtKB" id="P0CX35"/>
    </source>
</evidence>
<evidence type="ECO:0000269" key="2">
    <source>
    </source>
</evidence>
<evidence type="ECO:0000305" key="3"/>
<keyword id="KW-0963">Cytoplasm</keyword>
<keyword id="KW-1185">Reference proteome</keyword>
<keyword id="KW-0687">Ribonucleoprotein</keyword>
<keyword id="KW-0689">Ribosomal protein</keyword>
<keyword id="KW-0694">RNA-binding</keyword>
<keyword id="KW-0699">rRNA-binding</keyword>
<reference key="1">
    <citation type="journal article" date="2002" name="Nature">
        <title>The genome sequence of Schizosaccharomyces pombe.</title>
        <authorList>
            <person name="Wood V."/>
            <person name="Gwilliam R."/>
            <person name="Rajandream M.A."/>
            <person name="Lyne M.H."/>
            <person name="Lyne R."/>
            <person name="Stewart A."/>
            <person name="Sgouros J.G."/>
            <person name="Peat N."/>
            <person name="Hayles J."/>
            <person name="Baker S.G."/>
            <person name="Basham D."/>
            <person name="Bowman S."/>
            <person name="Brooks K."/>
            <person name="Brown D."/>
            <person name="Brown S."/>
            <person name="Chillingworth T."/>
            <person name="Churcher C.M."/>
            <person name="Collins M."/>
            <person name="Connor R."/>
            <person name="Cronin A."/>
            <person name="Davis P."/>
            <person name="Feltwell T."/>
            <person name="Fraser A."/>
            <person name="Gentles S."/>
            <person name="Goble A."/>
            <person name="Hamlin N."/>
            <person name="Harris D.E."/>
            <person name="Hidalgo J."/>
            <person name="Hodgson G."/>
            <person name="Holroyd S."/>
            <person name="Hornsby T."/>
            <person name="Howarth S."/>
            <person name="Huckle E.J."/>
            <person name="Hunt S."/>
            <person name="Jagels K."/>
            <person name="James K.D."/>
            <person name="Jones L."/>
            <person name="Jones M."/>
            <person name="Leather S."/>
            <person name="McDonald S."/>
            <person name="McLean J."/>
            <person name="Mooney P."/>
            <person name="Moule S."/>
            <person name="Mungall K.L."/>
            <person name="Murphy L.D."/>
            <person name="Niblett D."/>
            <person name="Odell C."/>
            <person name="Oliver K."/>
            <person name="O'Neil S."/>
            <person name="Pearson D."/>
            <person name="Quail M.A."/>
            <person name="Rabbinowitsch E."/>
            <person name="Rutherford K.M."/>
            <person name="Rutter S."/>
            <person name="Saunders D."/>
            <person name="Seeger K."/>
            <person name="Sharp S."/>
            <person name="Skelton J."/>
            <person name="Simmonds M.N."/>
            <person name="Squares R."/>
            <person name="Squares S."/>
            <person name="Stevens K."/>
            <person name="Taylor K."/>
            <person name="Taylor R.G."/>
            <person name="Tivey A."/>
            <person name="Walsh S.V."/>
            <person name="Warren T."/>
            <person name="Whitehead S."/>
            <person name="Woodward J.R."/>
            <person name="Volckaert G."/>
            <person name="Aert R."/>
            <person name="Robben J."/>
            <person name="Grymonprez B."/>
            <person name="Weltjens I."/>
            <person name="Vanstreels E."/>
            <person name="Rieger M."/>
            <person name="Schaefer M."/>
            <person name="Mueller-Auer S."/>
            <person name="Gabel C."/>
            <person name="Fuchs M."/>
            <person name="Duesterhoeft A."/>
            <person name="Fritzc C."/>
            <person name="Holzer E."/>
            <person name="Moestl D."/>
            <person name="Hilbert H."/>
            <person name="Borzym K."/>
            <person name="Langer I."/>
            <person name="Beck A."/>
            <person name="Lehrach H."/>
            <person name="Reinhardt R."/>
            <person name="Pohl T.M."/>
            <person name="Eger P."/>
            <person name="Zimmermann W."/>
            <person name="Wedler H."/>
            <person name="Wambutt R."/>
            <person name="Purnelle B."/>
            <person name="Goffeau A."/>
            <person name="Cadieu E."/>
            <person name="Dreano S."/>
            <person name="Gloux S."/>
            <person name="Lelaure V."/>
            <person name="Mottier S."/>
            <person name="Galibert F."/>
            <person name="Aves S.J."/>
            <person name="Xiang Z."/>
            <person name="Hunt C."/>
            <person name="Moore K."/>
            <person name="Hurst S.M."/>
            <person name="Lucas M."/>
            <person name="Rochet M."/>
            <person name="Gaillardin C."/>
            <person name="Tallada V.A."/>
            <person name="Garzon A."/>
            <person name="Thode G."/>
            <person name="Daga R.R."/>
            <person name="Cruzado L."/>
            <person name="Jimenez J."/>
            <person name="Sanchez M."/>
            <person name="del Rey F."/>
            <person name="Benito J."/>
            <person name="Dominguez A."/>
            <person name="Revuelta J.L."/>
            <person name="Moreno S."/>
            <person name="Armstrong J."/>
            <person name="Forsburg S.L."/>
            <person name="Cerutti L."/>
            <person name="Lowe T."/>
            <person name="McCombie W.R."/>
            <person name="Paulsen I."/>
            <person name="Potashkin J."/>
            <person name="Shpakovski G.V."/>
            <person name="Ussery D."/>
            <person name="Barrell B.G."/>
            <person name="Nurse P."/>
        </authorList>
    </citation>
    <scope>NUCLEOTIDE SEQUENCE [LARGE SCALE GENOMIC DNA]</scope>
    <source>
        <strain>972 / ATCC 24843</strain>
    </source>
</reference>
<reference key="2">
    <citation type="submission" date="1997-04" db="EMBL/GenBank/DDBJ databases">
        <authorList>
            <person name="Jang Y.-J."/>
            <person name="Yoo H.-S."/>
        </authorList>
    </citation>
    <scope>NUCLEOTIDE SEQUENCE [MRNA] OF 1-81</scope>
    <source>
        <strain>972 / ATCC 24843</strain>
    </source>
</reference>
<reference key="3">
    <citation type="journal article" date="2006" name="Nat. Biotechnol.">
        <title>ORFeome cloning and global analysis of protein localization in the fission yeast Schizosaccharomyces pombe.</title>
        <authorList>
            <person name="Matsuyama A."/>
            <person name="Arai R."/>
            <person name="Yashiroda Y."/>
            <person name="Shirai A."/>
            <person name="Kamata A."/>
            <person name="Sekido S."/>
            <person name="Kobayashi Y."/>
            <person name="Hashimoto A."/>
            <person name="Hamamoto M."/>
            <person name="Hiraoka Y."/>
            <person name="Horinouchi S."/>
            <person name="Yoshida M."/>
        </authorList>
    </citation>
    <scope>SUBCELLULAR LOCATION [LARGE SCALE ANALYSIS]</scope>
</reference>
<comment type="function">
    <text evidence="1">Component of the ribosome, a large ribonucleoprotein complex responsible for the synthesis of proteins in the cell. The small ribosomal subunit (SSU) binds messenger RNAs (mRNAs) and translates the encoded message by selecting cognate aminoacyl-transfer RNA (tRNA) molecules. The large subunit (LSU) contains the ribosomal catalytic site termed the peptidyl transferase center (PTC), which catalyzes the formation of peptide bonds, thereby polymerizing the amino acids delivered by tRNAs into a polypeptide chain. The nascent polypeptides leave the ribosome through a tunnel in the LSU and interact with protein factors that function in enzymatic processing, targeting, and the membrane insertion of nascent chains at the exit of the ribosomal tunnel.</text>
</comment>
<comment type="subunit">
    <text evidence="1">Component of the small ribosomal subunit (SSU). Mature yeast ribosomes consist of a small (40S) and a large (60S) subunit. The 40S small subunit contains 1 molecule of ribosomal RNA (18S rRNA) and at least 33 different proteins. The large 60S subunit contains 3 rRNA molecules (25S, 5.8S and 5S rRNA) and at least 46 different proteins.</text>
</comment>
<comment type="subcellular location">
    <subcellularLocation>
        <location evidence="2">Cytoplasm</location>
    </subcellularLocation>
</comment>
<comment type="miscellaneous">
    <text>There are 3 genes for eS4 in S.pombe.</text>
</comment>
<comment type="similarity">
    <text evidence="3">Belongs to the eukaryotic ribosomal protein eS4 family.</text>
</comment>
<sequence>MVRGPKKHLKRVAAPHHWLLDKLSGTYAPKPSPGPHKARECLPLIVFLRNRLKYALNGREVKAILMQRLIKVDGKVRTDSTFPTGFMDVISVEKTGEHFRLVYDIKGRFTVHRITAEEAKYKLCKVKRVQLGAKGVPFLVTHDGRTIRYPDPLIKVNDTIKLNLETNKIESFIKFDTSAQVMVTGGRNMGRVGTIVHREHHLGSFEIIHVKDALDREFATRLSNVFVIGETGKSWISLPKGKGVKLSITEERDRRRALKGLA</sequence>